<gene>
    <name type="primary">HSP70</name>
    <name type="synonym">ST70</name>
</gene>
<name>HSP7S_PEA</name>
<organism>
    <name type="scientific">Pisum sativum</name>
    <name type="common">Garden pea</name>
    <name type="synonym">Lathyrus oleraceus</name>
    <dbReference type="NCBI Taxonomy" id="3888"/>
    <lineage>
        <taxon>Eukaryota</taxon>
        <taxon>Viridiplantae</taxon>
        <taxon>Streptophyta</taxon>
        <taxon>Embryophyta</taxon>
        <taxon>Tracheophyta</taxon>
        <taxon>Spermatophyta</taxon>
        <taxon>Magnoliopsida</taxon>
        <taxon>eudicotyledons</taxon>
        <taxon>Gunneridae</taxon>
        <taxon>Pentapetalae</taxon>
        <taxon>rosids</taxon>
        <taxon>fabids</taxon>
        <taxon>Fabales</taxon>
        <taxon>Fabaceae</taxon>
        <taxon>Papilionoideae</taxon>
        <taxon>50 kb inversion clade</taxon>
        <taxon>NPAAA clade</taxon>
        <taxon>Hologalegina</taxon>
        <taxon>IRL clade</taxon>
        <taxon>Fabeae</taxon>
        <taxon>Pisum</taxon>
    </lineage>
</organism>
<sequence>MASSAQIHGLGTASFSSLKKPSSISGNSKTLFFGQRLNSNHSPFTRAAFPKLSSKTFKKGFTLRVVSEKVVGIDLGTTNSAVAAMEGGKPTIITNAEGQRTTPSVVAYTKNGDRLVGQIAKRQAVVNPENTFFSVKRFIGRKMSEVDEESKQVSYRVIRDDNGNVKLDCPAIGKSFAAEEISAQVLRKLVDDASKFLNDKVTKAVVTVPAYFNDSQRTATKDAGRIAGLEVLRIINEPTAASLAYGFERKNNETILVFDLGGGTFDVSVLEVGDGVFEVLSTSGDTHLGGDDFDKRVVDWLAGDFKRDEGIDLLKDKQALQRLTETAEKAKMELSSLSQTNISLPFITATADGPKHIETTLTRAKFEELCSDLLDRLRTPVENSLRDAKLSIKDIDEVILVGGSTRIPAVQELVKKLIGKDPNVTVNPDEVVALGAAVQAGVLAGDVSDIVLLDVSPLSLGLETLGGVMTKIIPRNTTLPTSKSEVFSTAADGQTSVEINVLQGEREFVRDNKSLGSFRLDGIPPAPRGVPQIEVKFDIDANGILSVAAIDKGTGKKQDITITGASTLPGDEVERMVSEAERFSKEDKEKREAIDTKNQADSVVYQTEKQLKELGEKVPAPVKEKVEAKLGELKEAITGGSTQTIKDALAALNQEVMQLGQSLYNQPGAAGQAGPTPPGSESGPSESSGKEGPEGDVIDADFTDSK</sequence>
<dbReference type="EMBL" id="L03299">
    <property type="protein sequence ID" value="AAA33637.1"/>
    <property type="molecule type" value="mRNA"/>
</dbReference>
<dbReference type="EMBL" id="X69213">
    <property type="protein sequence ID" value="CAA49147.1"/>
    <property type="molecule type" value="Genomic_DNA"/>
</dbReference>
<dbReference type="PIR" id="S32818">
    <property type="entry name" value="S32818"/>
</dbReference>
<dbReference type="SMR" id="Q02028"/>
<dbReference type="DIP" id="DIP-735N"/>
<dbReference type="IntAct" id="Q02028">
    <property type="interactions" value="3"/>
</dbReference>
<dbReference type="TCDB" id="3.A.9.1.1">
    <property type="family name" value="the chloroplast envelope protein translocase (cept or tic-toc) family"/>
</dbReference>
<dbReference type="OrthoDB" id="2401965at2759"/>
<dbReference type="GO" id="GO:0009570">
    <property type="term" value="C:chloroplast stroma"/>
    <property type="evidence" value="ECO:0007669"/>
    <property type="project" value="UniProtKB-SubCell"/>
</dbReference>
<dbReference type="GO" id="GO:0005524">
    <property type="term" value="F:ATP binding"/>
    <property type="evidence" value="ECO:0007669"/>
    <property type="project" value="UniProtKB-KW"/>
</dbReference>
<dbReference type="GO" id="GO:0140662">
    <property type="term" value="F:ATP-dependent protein folding chaperone"/>
    <property type="evidence" value="ECO:0007669"/>
    <property type="project" value="InterPro"/>
</dbReference>
<dbReference type="GO" id="GO:0051082">
    <property type="term" value="F:unfolded protein binding"/>
    <property type="evidence" value="ECO:0007669"/>
    <property type="project" value="InterPro"/>
</dbReference>
<dbReference type="CDD" id="cd10234">
    <property type="entry name" value="ASKHA_NBD_HSP70_DnaK-like"/>
    <property type="match status" value="1"/>
</dbReference>
<dbReference type="FunFam" id="1.20.1270.10:FF:000001">
    <property type="entry name" value="Molecular chaperone DnaK"/>
    <property type="match status" value="1"/>
</dbReference>
<dbReference type="FunFam" id="3.30.420.40:FF:000004">
    <property type="entry name" value="Molecular chaperone DnaK"/>
    <property type="match status" value="1"/>
</dbReference>
<dbReference type="FunFam" id="3.90.640.10:FF:000003">
    <property type="entry name" value="Molecular chaperone DnaK"/>
    <property type="match status" value="1"/>
</dbReference>
<dbReference type="FunFam" id="2.60.34.10:FF:000008">
    <property type="entry name" value="Stromal 70 kDa heat shock-related protein"/>
    <property type="match status" value="1"/>
</dbReference>
<dbReference type="Gene3D" id="1.20.1270.10">
    <property type="match status" value="1"/>
</dbReference>
<dbReference type="Gene3D" id="3.30.420.40">
    <property type="match status" value="2"/>
</dbReference>
<dbReference type="Gene3D" id="3.90.640.10">
    <property type="entry name" value="Actin, Chain A, domain 4"/>
    <property type="match status" value="1"/>
</dbReference>
<dbReference type="Gene3D" id="2.60.34.10">
    <property type="entry name" value="Substrate Binding Domain Of DNAk, Chain A, domain 1"/>
    <property type="match status" value="1"/>
</dbReference>
<dbReference type="HAMAP" id="MF_00332">
    <property type="entry name" value="DnaK"/>
    <property type="match status" value="1"/>
</dbReference>
<dbReference type="InterPro" id="IPR043129">
    <property type="entry name" value="ATPase_NBD"/>
</dbReference>
<dbReference type="InterPro" id="IPR012725">
    <property type="entry name" value="Chaperone_DnaK"/>
</dbReference>
<dbReference type="InterPro" id="IPR018181">
    <property type="entry name" value="Heat_shock_70_CS"/>
</dbReference>
<dbReference type="InterPro" id="IPR029048">
    <property type="entry name" value="HSP70_C_sf"/>
</dbReference>
<dbReference type="InterPro" id="IPR029047">
    <property type="entry name" value="HSP70_peptide-bd_sf"/>
</dbReference>
<dbReference type="InterPro" id="IPR013126">
    <property type="entry name" value="Hsp_70_fam"/>
</dbReference>
<dbReference type="NCBIfam" id="NF001413">
    <property type="entry name" value="PRK00290.1"/>
    <property type="match status" value="1"/>
</dbReference>
<dbReference type="NCBIfam" id="TIGR02350">
    <property type="entry name" value="prok_dnaK"/>
    <property type="match status" value="1"/>
</dbReference>
<dbReference type="PANTHER" id="PTHR19375">
    <property type="entry name" value="HEAT SHOCK PROTEIN 70KDA"/>
    <property type="match status" value="1"/>
</dbReference>
<dbReference type="Pfam" id="PF00012">
    <property type="entry name" value="HSP70"/>
    <property type="match status" value="1"/>
</dbReference>
<dbReference type="PRINTS" id="PR00301">
    <property type="entry name" value="HEATSHOCK70"/>
</dbReference>
<dbReference type="SUPFAM" id="SSF53067">
    <property type="entry name" value="Actin-like ATPase domain"/>
    <property type="match status" value="2"/>
</dbReference>
<dbReference type="SUPFAM" id="SSF100934">
    <property type="entry name" value="Heat shock protein 70kD (HSP70), C-terminal subdomain"/>
    <property type="match status" value="1"/>
</dbReference>
<dbReference type="SUPFAM" id="SSF100920">
    <property type="entry name" value="Heat shock protein 70kD (HSP70), peptide-binding domain"/>
    <property type="match status" value="1"/>
</dbReference>
<dbReference type="PROSITE" id="PS00297">
    <property type="entry name" value="HSP70_1"/>
    <property type="match status" value="1"/>
</dbReference>
<dbReference type="PROSITE" id="PS00329">
    <property type="entry name" value="HSP70_2"/>
    <property type="match status" value="1"/>
</dbReference>
<dbReference type="PROSITE" id="PS01036">
    <property type="entry name" value="HSP70_3"/>
    <property type="match status" value="1"/>
</dbReference>
<feature type="transit peptide" description="Chloroplast" evidence="1">
    <location>
        <begin position="1"/>
        <end position="67"/>
    </location>
</feature>
<feature type="chain" id="PRO_0000013550" description="Stromal 70 kDa heat shock-related protein, chloroplastic">
    <location>
        <begin position="68"/>
        <end position="706"/>
    </location>
</feature>
<feature type="region of interest" description="Disordered" evidence="2">
    <location>
        <begin position="663"/>
        <end position="706"/>
    </location>
</feature>
<feature type="compositionally biased region" description="Low complexity" evidence="2">
    <location>
        <begin position="666"/>
        <end position="687"/>
    </location>
</feature>
<feature type="compositionally biased region" description="Acidic residues" evidence="2">
    <location>
        <begin position="694"/>
        <end position="706"/>
    </location>
</feature>
<reference key="1">
    <citation type="journal article" date="1992" name="Plant Physiol.">
        <title>Isolation and characterization of a cDNA clone encoding the major Hsp70 of the pea chloroplastic stroma.</title>
        <authorList>
            <person name="Marshall J.S."/>
            <person name="Keegstra K."/>
        </authorList>
    </citation>
    <scope>NUCLEOTIDE SEQUENCE</scope>
    <source>
        <tissue>Leaf</tissue>
    </source>
</reference>
<reference key="2">
    <citation type="submission" date="1992-11" db="EMBL/GenBank/DDBJ databases">
        <authorList>
            <person name="Casey R."/>
            <person name="Creissen G."/>
            <person name="Domoney C."/>
            <person name="Forster C."/>
            <person name="Matta N."/>
        </authorList>
    </citation>
    <scope>NUCLEOTIDE SEQUENCE</scope>
    <source>
        <strain>cv. Dark skinned Perfection</strain>
        <tissue>Leaf</tissue>
    </source>
</reference>
<comment type="function">
    <text>Interacts with newly imported chloroplast proteins to assist in their maturation.</text>
</comment>
<comment type="subcellular location">
    <subcellularLocation>
        <location>Plastid</location>
        <location>Chloroplast stroma</location>
    </subcellularLocation>
</comment>
<comment type="similarity">
    <text evidence="3">Belongs to the heat shock protein 70 family.</text>
</comment>
<proteinExistence type="evidence at transcript level"/>
<protein>
    <recommendedName>
        <fullName>Stromal 70 kDa heat shock-related protein, chloroplastic</fullName>
    </recommendedName>
</protein>
<keyword id="KW-0067">ATP-binding</keyword>
<keyword id="KW-0150">Chloroplast</keyword>
<keyword id="KW-0547">Nucleotide-binding</keyword>
<keyword id="KW-0934">Plastid</keyword>
<keyword id="KW-0346">Stress response</keyword>
<keyword id="KW-0809">Transit peptide</keyword>
<accession>Q02028</accession>
<evidence type="ECO:0000255" key="1"/>
<evidence type="ECO:0000256" key="2">
    <source>
        <dbReference type="SAM" id="MobiDB-lite"/>
    </source>
</evidence>
<evidence type="ECO:0000305" key="3"/>